<keyword id="KW-0012">Acyltransferase</keyword>
<keyword id="KW-1003">Cell membrane</keyword>
<keyword id="KW-0449">Lipoprotein</keyword>
<keyword id="KW-0472">Membrane</keyword>
<keyword id="KW-0564">Palmitate</keyword>
<keyword id="KW-1185">Reference proteome</keyword>
<keyword id="KW-0808">Transferase</keyword>
<keyword id="KW-0812">Transmembrane</keyword>
<keyword id="KW-1133">Transmembrane helix</keyword>
<accession>Q8L5Y5</accession>
<accession>O23362</accession>
<protein>
    <recommendedName>
        <fullName>Probable protein S-acyltransferase 19</fullName>
        <ecNumber>2.3.1.225</ecNumber>
    </recommendedName>
    <alternativeName>
        <fullName>Probable palmitoyltransferase At4g15080</fullName>
    </alternativeName>
    <alternativeName>
        <fullName>Zinc finger DHHC domain-containing protein At4g15080</fullName>
    </alternativeName>
</protein>
<evidence type="ECO:0000250" key="1"/>
<evidence type="ECO:0000255" key="2"/>
<evidence type="ECO:0000255" key="3">
    <source>
        <dbReference type="PROSITE-ProRule" id="PRU00067"/>
    </source>
</evidence>
<evidence type="ECO:0000256" key="4">
    <source>
        <dbReference type="SAM" id="MobiDB-lite"/>
    </source>
</evidence>
<evidence type="ECO:0000269" key="5">
    <source ref="5"/>
</evidence>
<evidence type="ECO:0000305" key="6"/>
<proteinExistence type="evidence at transcript level"/>
<feature type="chain" id="PRO_0000363603" description="Probable protein S-acyltransferase 19">
    <location>
        <begin position="1"/>
        <end position="718"/>
    </location>
</feature>
<feature type="transmembrane region" description="Helical" evidence="2">
    <location>
        <begin position="16"/>
        <end position="36"/>
    </location>
</feature>
<feature type="transmembrane region" description="Helical" evidence="2">
    <location>
        <begin position="41"/>
        <end position="61"/>
    </location>
</feature>
<feature type="transmembrane region" description="Helical" evidence="2">
    <location>
        <begin position="222"/>
        <end position="242"/>
    </location>
</feature>
<feature type="transmembrane region" description="Helical" evidence="2">
    <location>
        <begin position="277"/>
        <end position="297"/>
    </location>
</feature>
<feature type="domain" description="DHHC" evidence="3">
    <location>
        <begin position="174"/>
        <end position="224"/>
    </location>
</feature>
<feature type="region of interest" description="Disordered" evidence="4">
    <location>
        <begin position="100"/>
        <end position="125"/>
    </location>
</feature>
<feature type="region of interest" description="Disordered" evidence="4">
    <location>
        <begin position="454"/>
        <end position="511"/>
    </location>
</feature>
<feature type="region of interest" description="Disordered" evidence="4">
    <location>
        <begin position="598"/>
        <end position="649"/>
    </location>
</feature>
<feature type="region of interest" description="Disordered" evidence="4">
    <location>
        <begin position="664"/>
        <end position="718"/>
    </location>
</feature>
<feature type="compositionally biased region" description="Polar residues" evidence="4">
    <location>
        <begin position="103"/>
        <end position="124"/>
    </location>
</feature>
<feature type="compositionally biased region" description="Polar residues" evidence="4">
    <location>
        <begin position="479"/>
        <end position="488"/>
    </location>
</feature>
<feature type="compositionally biased region" description="Polar residues" evidence="4">
    <location>
        <begin position="598"/>
        <end position="626"/>
    </location>
</feature>
<feature type="compositionally biased region" description="Basic and acidic residues" evidence="4">
    <location>
        <begin position="673"/>
        <end position="687"/>
    </location>
</feature>
<feature type="active site" description="S-palmitoyl cysteine intermediate" evidence="1">
    <location>
        <position position="204"/>
    </location>
</feature>
<comment type="function">
    <text evidence="1 5">Palmitoyl acyltransferase.</text>
</comment>
<comment type="catalytic activity">
    <reaction>
        <text>L-cysteinyl-[protein] + hexadecanoyl-CoA = S-hexadecanoyl-L-cysteinyl-[protein] + CoA</text>
        <dbReference type="Rhea" id="RHEA:36683"/>
        <dbReference type="Rhea" id="RHEA-COMP:10131"/>
        <dbReference type="Rhea" id="RHEA-COMP:11032"/>
        <dbReference type="ChEBI" id="CHEBI:29950"/>
        <dbReference type="ChEBI" id="CHEBI:57287"/>
        <dbReference type="ChEBI" id="CHEBI:57379"/>
        <dbReference type="ChEBI" id="CHEBI:74151"/>
        <dbReference type="EC" id="2.3.1.225"/>
    </reaction>
</comment>
<comment type="subcellular location">
    <subcellularLocation>
        <location evidence="6">Cell membrane</location>
        <topology evidence="6">Multi-pass membrane protein</topology>
    </subcellularLocation>
</comment>
<comment type="domain">
    <text evidence="1">The DHHC domain is required for palmitoyltransferase activity.</text>
</comment>
<comment type="similarity">
    <text evidence="6">Belongs to the DHHC palmitoyltransferase family.</text>
</comment>
<comment type="sequence caution" evidence="6">
    <conflict type="erroneous gene model prediction">
        <sequence resource="EMBL-CDS" id="CAB10287"/>
    </conflict>
</comment>
<comment type="sequence caution" evidence="6">
    <conflict type="erroneous gene model prediction">
        <sequence resource="EMBL-CDS" id="CAB78550"/>
    </conflict>
</comment>
<organism>
    <name type="scientific">Arabidopsis thaliana</name>
    <name type="common">Mouse-ear cress</name>
    <dbReference type="NCBI Taxonomy" id="3702"/>
    <lineage>
        <taxon>Eukaryota</taxon>
        <taxon>Viridiplantae</taxon>
        <taxon>Streptophyta</taxon>
        <taxon>Embryophyta</taxon>
        <taxon>Tracheophyta</taxon>
        <taxon>Spermatophyta</taxon>
        <taxon>Magnoliopsida</taxon>
        <taxon>eudicotyledons</taxon>
        <taxon>Gunneridae</taxon>
        <taxon>Pentapetalae</taxon>
        <taxon>rosids</taxon>
        <taxon>malvids</taxon>
        <taxon>Brassicales</taxon>
        <taxon>Brassicaceae</taxon>
        <taxon>Camelineae</taxon>
        <taxon>Arabidopsis</taxon>
    </lineage>
</organism>
<gene>
    <name type="primary">PAT19</name>
    <name type="ordered locus">At4g15080</name>
    <name type="ORF">dl3585c</name>
    <name type="ORF">FCAALL.183</name>
</gene>
<dbReference type="EC" id="2.3.1.225"/>
<dbReference type="EMBL" id="Z97337">
    <property type="protein sequence ID" value="CAB10287.1"/>
    <property type="status" value="ALT_SEQ"/>
    <property type="molecule type" value="Genomic_DNA"/>
</dbReference>
<dbReference type="EMBL" id="AL161540">
    <property type="protein sequence ID" value="CAB78550.1"/>
    <property type="status" value="ALT_SEQ"/>
    <property type="molecule type" value="Genomic_DNA"/>
</dbReference>
<dbReference type="EMBL" id="CP002687">
    <property type="protein sequence ID" value="AEE83552.1"/>
    <property type="molecule type" value="Genomic_DNA"/>
</dbReference>
<dbReference type="EMBL" id="CP002687">
    <property type="protein sequence ID" value="ANM66481.1"/>
    <property type="molecule type" value="Genomic_DNA"/>
</dbReference>
<dbReference type="EMBL" id="AY099860">
    <property type="protein sequence ID" value="AAM20711.1"/>
    <property type="molecule type" value="mRNA"/>
</dbReference>
<dbReference type="EMBL" id="BT008794">
    <property type="protein sequence ID" value="AAP68233.1"/>
    <property type="molecule type" value="mRNA"/>
</dbReference>
<dbReference type="PIR" id="E71414">
    <property type="entry name" value="E71414"/>
</dbReference>
<dbReference type="RefSeq" id="NP_001328372.1">
    <property type="nucleotide sequence ID" value="NM_001340991.1"/>
</dbReference>
<dbReference type="RefSeq" id="NP_193244.2">
    <property type="nucleotide sequence ID" value="NM_117595.5"/>
</dbReference>
<dbReference type="FunCoup" id="Q8L5Y5">
    <property type="interactions" value="900"/>
</dbReference>
<dbReference type="STRING" id="3702.Q8L5Y5"/>
<dbReference type="GlyGen" id="Q8L5Y5">
    <property type="glycosylation" value="1 site"/>
</dbReference>
<dbReference type="iPTMnet" id="Q8L5Y5"/>
<dbReference type="SwissPalm" id="Q8L5Y5"/>
<dbReference type="PaxDb" id="3702-AT4G15080.1"/>
<dbReference type="ProteomicsDB" id="242973"/>
<dbReference type="EnsemblPlants" id="AT4G15080.1">
    <property type="protein sequence ID" value="AT4G15080.1"/>
    <property type="gene ID" value="AT4G15080"/>
</dbReference>
<dbReference type="EnsemblPlants" id="AT4G15080.2">
    <property type="protein sequence ID" value="AT4G15080.2"/>
    <property type="gene ID" value="AT4G15080"/>
</dbReference>
<dbReference type="GeneID" id="827172"/>
<dbReference type="Gramene" id="AT4G15080.1">
    <property type="protein sequence ID" value="AT4G15080.1"/>
    <property type="gene ID" value="AT4G15080"/>
</dbReference>
<dbReference type="Gramene" id="AT4G15080.2">
    <property type="protein sequence ID" value="AT4G15080.2"/>
    <property type="gene ID" value="AT4G15080"/>
</dbReference>
<dbReference type="KEGG" id="ath:AT4G15080"/>
<dbReference type="Araport" id="AT4G15080"/>
<dbReference type="TAIR" id="AT4G15080"/>
<dbReference type="eggNOG" id="KOG1311">
    <property type="taxonomic scope" value="Eukaryota"/>
</dbReference>
<dbReference type="HOGENOM" id="CLU_020283_2_1_1"/>
<dbReference type="InParanoid" id="Q8L5Y5"/>
<dbReference type="OMA" id="DCRKPDE"/>
<dbReference type="OrthoDB" id="9909019at2759"/>
<dbReference type="PhylomeDB" id="Q8L5Y5"/>
<dbReference type="BRENDA" id="2.3.1.225">
    <property type="organism ID" value="399"/>
</dbReference>
<dbReference type="PRO" id="PR:Q8L5Y5"/>
<dbReference type="Proteomes" id="UP000006548">
    <property type="component" value="Chromosome 4"/>
</dbReference>
<dbReference type="ExpressionAtlas" id="Q8L5Y5">
    <property type="expression patterns" value="baseline and differential"/>
</dbReference>
<dbReference type="GO" id="GO:0005886">
    <property type="term" value="C:plasma membrane"/>
    <property type="evidence" value="ECO:0007669"/>
    <property type="project" value="UniProtKB-SubCell"/>
</dbReference>
<dbReference type="GO" id="GO:0019706">
    <property type="term" value="F:protein-cysteine S-palmitoyltransferase activity"/>
    <property type="evidence" value="ECO:0007669"/>
    <property type="project" value="UniProtKB-EC"/>
</dbReference>
<dbReference type="InterPro" id="IPR001594">
    <property type="entry name" value="Palmitoyltrfase_DHHC"/>
</dbReference>
<dbReference type="InterPro" id="IPR039859">
    <property type="entry name" value="PFA4/ZDH16/20/ERF2-like"/>
</dbReference>
<dbReference type="PANTHER" id="PTHR22883:SF203">
    <property type="entry name" value="PALMITOYLTRANSFERASE"/>
    <property type="match status" value="1"/>
</dbReference>
<dbReference type="PANTHER" id="PTHR22883">
    <property type="entry name" value="ZINC FINGER DHHC DOMAIN CONTAINING PROTEIN"/>
    <property type="match status" value="1"/>
</dbReference>
<dbReference type="Pfam" id="PF01529">
    <property type="entry name" value="DHHC"/>
    <property type="match status" value="1"/>
</dbReference>
<dbReference type="PROSITE" id="PS50216">
    <property type="entry name" value="DHHC"/>
    <property type="match status" value="1"/>
</dbReference>
<reference key="1">
    <citation type="journal article" date="1998" name="Nature">
        <title>Analysis of 1.9 Mb of contiguous sequence from chromosome 4 of Arabidopsis thaliana.</title>
        <authorList>
            <person name="Bevan M."/>
            <person name="Bancroft I."/>
            <person name="Bent E."/>
            <person name="Love K."/>
            <person name="Goodman H.M."/>
            <person name="Dean C."/>
            <person name="Bergkamp R."/>
            <person name="Dirkse W."/>
            <person name="van Staveren M."/>
            <person name="Stiekema W."/>
            <person name="Drost L."/>
            <person name="Ridley P."/>
            <person name="Hudson S.-A."/>
            <person name="Patel K."/>
            <person name="Murphy G."/>
            <person name="Piffanelli P."/>
            <person name="Wedler H."/>
            <person name="Wedler E."/>
            <person name="Wambutt R."/>
            <person name="Weitzenegger T."/>
            <person name="Pohl T."/>
            <person name="Terryn N."/>
            <person name="Gielen J."/>
            <person name="Villarroel R."/>
            <person name="De Clercq R."/>
            <person name="van Montagu M."/>
            <person name="Lecharny A."/>
            <person name="Aubourg S."/>
            <person name="Gy I."/>
            <person name="Kreis M."/>
            <person name="Lao N."/>
            <person name="Kavanagh T."/>
            <person name="Hempel S."/>
            <person name="Kotter P."/>
            <person name="Entian K.-D."/>
            <person name="Rieger M."/>
            <person name="Schaefer M."/>
            <person name="Funk B."/>
            <person name="Mueller-Auer S."/>
            <person name="Silvey M."/>
            <person name="James R."/>
            <person name="Monfort A."/>
            <person name="Pons A."/>
            <person name="Puigdomenech P."/>
            <person name="Douka A."/>
            <person name="Voukelatou E."/>
            <person name="Milioni D."/>
            <person name="Hatzopoulos P."/>
            <person name="Piravandi E."/>
            <person name="Obermaier B."/>
            <person name="Hilbert H."/>
            <person name="Duesterhoeft A."/>
            <person name="Moores T."/>
            <person name="Jones J.D.G."/>
            <person name="Eneva T."/>
            <person name="Palme K."/>
            <person name="Benes V."/>
            <person name="Rechmann S."/>
            <person name="Ansorge W."/>
            <person name="Cooke R."/>
            <person name="Berger C."/>
            <person name="Delseny M."/>
            <person name="Voet M."/>
            <person name="Volckaert G."/>
            <person name="Mewes H.-W."/>
            <person name="Klosterman S."/>
            <person name="Schueller C."/>
            <person name="Chalwatzis N."/>
        </authorList>
    </citation>
    <scope>NUCLEOTIDE SEQUENCE [LARGE SCALE GENOMIC DNA]</scope>
    <source>
        <strain>cv. Columbia</strain>
    </source>
</reference>
<reference key="2">
    <citation type="journal article" date="1999" name="Nature">
        <title>Sequence and analysis of chromosome 4 of the plant Arabidopsis thaliana.</title>
        <authorList>
            <person name="Mayer K.F.X."/>
            <person name="Schueller C."/>
            <person name="Wambutt R."/>
            <person name="Murphy G."/>
            <person name="Volckaert G."/>
            <person name="Pohl T."/>
            <person name="Duesterhoeft A."/>
            <person name="Stiekema W."/>
            <person name="Entian K.-D."/>
            <person name="Terryn N."/>
            <person name="Harris B."/>
            <person name="Ansorge W."/>
            <person name="Brandt P."/>
            <person name="Grivell L.A."/>
            <person name="Rieger M."/>
            <person name="Weichselgartner M."/>
            <person name="de Simone V."/>
            <person name="Obermaier B."/>
            <person name="Mache R."/>
            <person name="Mueller M."/>
            <person name="Kreis M."/>
            <person name="Delseny M."/>
            <person name="Puigdomenech P."/>
            <person name="Watson M."/>
            <person name="Schmidtheini T."/>
            <person name="Reichert B."/>
            <person name="Portetelle D."/>
            <person name="Perez-Alonso M."/>
            <person name="Boutry M."/>
            <person name="Bancroft I."/>
            <person name="Vos P."/>
            <person name="Hoheisel J."/>
            <person name="Zimmermann W."/>
            <person name="Wedler H."/>
            <person name="Ridley P."/>
            <person name="Langham S.-A."/>
            <person name="McCullagh B."/>
            <person name="Bilham L."/>
            <person name="Robben J."/>
            <person name="van der Schueren J."/>
            <person name="Grymonprez B."/>
            <person name="Chuang Y.-J."/>
            <person name="Vandenbussche F."/>
            <person name="Braeken M."/>
            <person name="Weltjens I."/>
            <person name="Voet M."/>
            <person name="Bastiaens I."/>
            <person name="Aert R."/>
            <person name="Defoor E."/>
            <person name="Weitzenegger T."/>
            <person name="Bothe G."/>
            <person name="Ramsperger U."/>
            <person name="Hilbert H."/>
            <person name="Braun M."/>
            <person name="Holzer E."/>
            <person name="Brandt A."/>
            <person name="Peters S."/>
            <person name="van Staveren M."/>
            <person name="Dirkse W."/>
            <person name="Mooijman P."/>
            <person name="Klein Lankhorst R."/>
            <person name="Rose M."/>
            <person name="Hauf J."/>
            <person name="Koetter P."/>
            <person name="Berneiser S."/>
            <person name="Hempel S."/>
            <person name="Feldpausch M."/>
            <person name="Lamberth S."/>
            <person name="Van den Daele H."/>
            <person name="De Keyser A."/>
            <person name="Buysshaert C."/>
            <person name="Gielen J."/>
            <person name="Villarroel R."/>
            <person name="De Clercq R."/>
            <person name="van Montagu M."/>
            <person name="Rogers J."/>
            <person name="Cronin A."/>
            <person name="Quail M.A."/>
            <person name="Bray-Allen S."/>
            <person name="Clark L."/>
            <person name="Doggett J."/>
            <person name="Hall S."/>
            <person name="Kay M."/>
            <person name="Lennard N."/>
            <person name="McLay K."/>
            <person name="Mayes R."/>
            <person name="Pettett A."/>
            <person name="Rajandream M.A."/>
            <person name="Lyne M."/>
            <person name="Benes V."/>
            <person name="Rechmann S."/>
            <person name="Borkova D."/>
            <person name="Bloecker H."/>
            <person name="Scharfe M."/>
            <person name="Grimm M."/>
            <person name="Loehnert T.-H."/>
            <person name="Dose S."/>
            <person name="de Haan M."/>
            <person name="Maarse A.C."/>
            <person name="Schaefer M."/>
            <person name="Mueller-Auer S."/>
            <person name="Gabel C."/>
            <person name="Fuchs M."/>
            <person name="Fartmann B."/>
            <person name="Granderath K."/>
            <person name="Dauner D."/>
            <person name="Herzl A."/>
            <person name="Neumann S."/>
            <person name="Argiriou A."/>
            <person name="Vitale D."/>
            <person name="Liguori R."/>
            <person name="Piravandi E."/>
            <person name="Massenet O."/>
            <person name="Quigley F."/>
            <person name="Clabauld G."/>
            <person name="Muendlein A."/>
            <person name="Felber R."/>
            <person name="Schnabl S."/>
            <person name="Hiller R."/>
            <person name="Schmidt W."/>
            <person name="Lecharny A."/>
            <person name="Aubourg S."/>
            <person name="Chefdor F."/>
            <person name="Cooke R."/>
            <person name="Berger C."/>
            <person name="Monfort A."/>
            <person name="Casacuberta E."/>
            <person name="Gibbons T."/>
            <person name="Weber N."/>
            <person name="Vandenbol M."/>
            <person name="Bargues M."/>
            <person name="Terol J."/>
            <person name="Torres A."/>
            <person name="Perez-Perez A."/>
            <person name="Purnelle B."/>
            <person name="Bent E."/>
            <person name="Johnson S."/>
            <person name="Tacon D."/>
            <person name="Jesse T."/>
            <person name="Heijnen L."/>
            <person name="Schwarz S."/>
            <person name="Scholler P."/>
            <person name="Heber S."/>
            <person name="Francs P."/>
            <person name="Bielke C."/>
            <person name="Frishman D."/>
            <person name="Haase D."/>
            <person name="Lemcke K."/>
            <person name="Mewes H.-W."/>
            <person name="Stocker S."/>
            <person name="Zaccaria P."/>
            <person name="Bevan M."/>
            <person name="Wilson R.K."/>
            <person name="de la Bastide M."/>
            <person name="Habermann K."/>
            <person name="Parnell L."/>
            <person name="Dedhia N."/>
            <person name="Gnoj L."/>
            <person name="Schutz K."/>
            <person name="Huang E."/>
            <person name="Spiegel L."/>
            <person name="Sekhon M."/>
            <person name="Murray J."/>
            <person name="Sheet P."/>
            <person name="Cordes M."/>
            <person name="Abu-Threideh J."/>
            <person name="Stoneking T."/>
            <person name="Kalicki J."/>
            <person name="Graves T."/>
            <person name="Harmon G."/>
            <person name="Edwards J."/>
            <person name="Latreille P."/>
            <person name="Courtney L."/>
            <person name="Cloud J."/>
            <person name="Abbott A."/>
            <person name="Scott K."/>
            <person name="Johnson D."/>
            <person name="Minx P."/>
            <person name="Bentley D."/>
            <person name="Fulton B."/>
            <person name="Miller N."/>
            <person name="Greco T."/>
            <person name="Kemp K."/>
            <person name="Kramer J."/>
            <person name="Fulton L."/>
            <person name="Mardis E."/>
            <person name="Dante M."/>
            <person name="Pepin K."/>
            <person name="Hillier L.W."/>
            <person name="Nelson J."/>
            <person name="Spieth J."/>
            <person name="Ryan E."/>
            <person name="Andrews S."/>
            <person name="Geisel C."/>
            <person name="Layman D."/>
            <person name="Du H."/>
            <person name="Ali J."/>
            <person name="Berghoff A."/>
            <person name="Jones K."/>
            <person name="Drone K."/>
            <person name="Cotton M."/>
            <person name="Joshu C."/>
            <person name="Antonoiu B."/>
            <person name="Zidanic M."/>
            <person name="Strong C."/>
            <person name="Sun H."/>
            <person name="Lamar B."/>
            <person name="Yordan C."/>
            <person name="Ma P."/>
            <person name="Zhong J."/>
            <person name="Preston R."/>
            <person name="Vil D."/>
            <person name="Shekher M."/>
            <person name="Matero A."/>
            <person name="Shah R."/>
            <person name="Swaby I.K."/>
            <person name="O'Shaughnessy A."/>
            <person name="Rodriguez M."/>
            <person name="Hoffman J."/>
            <person name="Till S."/>
            <person name="Granat S."/>
            <person name="Shohdy N."/>
            <person name="Hasegawa A."/>
            <person name="Hameed A."/>
            <person name="Lodhi M."/>
            <person name="Johnson A."/>
            <person name="Chen E."/>
            <person name="Marra M.A."/>
            <person name="Martienssen R."/>
            <person name="McCombie W.R."/>
        </authorList>
    </citation>
    <scope>NUCLEOTIDE SEQUENCE [LARGE SCALE GENOMIC DNA]</scope>
    <source>
        <strain>cv. Columbia</strain>
    </source>
</reference>
<reference key="3">
    <citation type="journal article" date="2017" name="Plant J.">
        <title>Araport11: a complete reannotation of the Arabidopsis thaliana reference genome.</title>
        <authorList>
            <person name="Cheng C.Y."/>
            <person name="Krishnakumar V."/>
            <person name="Chan A.P."/>
            <person name="Thibaud-Nissen F."/>
            <person name="Schobel S."/>
            <person name="Town C.D."/>
        </authorList>
    </citation>
    <scope>GENOME REANNOTATION</scope>
    <source>
        <strain>cv. Columbia</strain>
    </source>
</reference>
<reference key="4">
    <citation type="journal article" date="2003" name="Science">
        <title>Empirical analysis of transcriptional activity in the Arabidopsis genome.</title>
        <authorList>
            <person name="Yamada K."/>
            <person name="Lim J."/>
            <person name="Dale J.M."/>
            <person name="Chen H."/>
            <person name="Shinn P."/>
            <person name="Palm C.J."/>
            <person name="Southwick A.M."/>
            <person name="Wu H.C."/>
            <person name="Kim C.J."/>
            <person name="Nguyen M."/>
            <person name="Pham P.K."/>
            <person name="Cheuk R.F."/>
            <person name="Karlin-Newmann G."/>
            <person name="Liu S.X."/>
            <person name="Lam B."/>
            <person name="Sakano H."/>
            <person name="Wu T."/>
            <person name="Yu G."/>
            <person name="Miranda M."/>
            <person name="Quach H.L."/>
            <person name="Tripp M."/>
            <person name="Chang C.H."/>
            <person name="Lee J.M."/>
            <person name="Toriumi M.J."/>
            <person name="Chan M.M."/>
            <person name="Tang C.C."/>
            <person name="Onodera C.S."/>
            <person name="Deng J.M."/>
            <person name="Akiyama K."/>
            <person name="Ansari Y."/>
            <person name="Arakawa T."/>
            <person name="Banh J."/>
            <person name="Banno F."/>
            <person name="Bowser L."/>
            <person name="Brooks S.Y."/>
            <person name="Carninci P."/>
            <person name="Chao Q."/>
            <person name="Choy N."/>
            <person name="Enju A."/>
            <person name="Goldsmith A.D."/>
            <person name="Gurjal M."/>
            <person name="Hansen N.F."/>
            <person name="Hayashizaki Y."/>
            <person name="Johnson-Hopson C."/>
            <person name="Hsuan V.W."/>
            <person name="Iida K."/>
            <person name="Karnes M."/>
            <person name="Khan S."/>
            <person name="Koesema E."/>
            <person name="Ishida J."/>
            <person name="Jiang P.X."/>
            <person name="Jones T."/>
            <person name="Kawai J."/>
            <person name="Kamiya A."/>
            <person name="Meyers C."/>
            <person name="Nakajima M."/>
            <person name="Narusaka M."/>
            <person name="Seki M."/>
            <person name="Sakurai T."/>
            <person name="Satou M."/>
            <person name="Tamse R."/>
            <person name="Vaysberg M."/>
            <person name="Wallender E.K."/>
            <person name="Wong C."/>
            <person name="Yamamura Y."/>
            <person name="Yuan S."/>
            <person name="Shinozaki K."/>
            <person name="Davis R.W."/>
            <person name="Theologis A."/>
            <person name="Ecker J.R."/>
        </authorList>
    </citation>
    <scope>NUCLEOTIDE SEQUENCE [LARGE SCALE MRNA]</scope>
    <source>
        <strain>cv. Columbia</strain>
    </source>
</reference>
<reference key="5">
    <citation type="book" date="2007" name="Proceedings of the 18th international conference on Arabidopsis research">
        <title>S-acylation: dynamic control of plant development and sigalling by lipid modification of proteins.</title>
        <authorList>
            <person name="Hemsley P.A."/>
            <person name="Taylor L."/>
            <person name="Grierson C.S."/>
        </authorList>
    </citation>
    <scope>GENE FAMILY</scope>
    <scope>FUNCTION</scope>
</reference>
<reference key="6">
    <citation type="journal article" date="2012" name="Plant Physiol.">
        <title>Genomics and localization of the Arabidopsis DHHC-cysteine-rich domain S-acyltransferase protein family.</title>
        <authorList>
            <person name="Batistic O."/>
        </authorList>
    </citation>
    <scope>SUBCELLULAR LOCATION</scope>
    <scope>GENE FAMILY</scope>
    <scope>NOMENCLATURE</scope>
</reference>
<name>ZDH17_ARATH</name>
<sequence length="718" mass="78738">MVRKHGWQLPAHKFQVVAITVFCLLSVAYYAFFAPFVGGRIWEYILLGVYSPVALIVFVLYVRCTAINPADPGIMSKFERGASRGGDLPTAKDISRKFDETGSHLQSSPSVASRTSTLPNSSVKGSVGDAQRVEAAKRKSCFNPLAICCGVFVYEDCRSKEETDEQQGDREEALFCTLCNAEVRKFSKHCRSCDKCVDCFDHHCRWLNNCVGRKNYMTFISLMAVSLLWLLIEAGVGIAVIVRVFVNKKDMETEIVNRLGNGFSRAPFATVVGLCTAVSMLALFPLGELFFFHMLLIKKGITTYEYVVAMRAMSEAPAGASIDEEIPNVLYSPSGSATTGFSGGSSLGLPYKGAWCTPPRVFVDYQDEVIPHLDPRMVPSTVDPDAAETAERGNKIPKRPVKISAWKLAKLNSNEATRAAARARASSSVLRPIENRHLHDDELSSRSGTISVVSSVSTEANGATLSREIRNNDPMLSHCRNSYAPSQGSRDEYDTGTHSMSSLSSPSHVHETVTLSPLPQHHTAGHRFTAAAASNSSRPPLNQATNHMIHSTFDEKIMQKGNHADPLLLPAPAASLLRDVRRTSVVWDQEAGRYISVPATTSEPRTRFSSQNQPIPSSHMGNTQNPRPVGHPPQDSSSGRAPPPTQQQQGERLMYTGESIFFGGPLVNIPNRDGLRHDGDSGREGQDRMTLTLPREARFKRDTTSNQLPVFAPVGTRK</sequence>